<name>X_HBVE3</name>
<comment type="function">
    <text evidence="1">Multifunctional protein that plays a role in silencing host antiviral defenses and promoting viral transcription. Does not seem to be essential for HBV infection. May be directly involved in development of cirrhosis and liver cancer (hepatocellular carcinoma). Most of cytosolic activities involve modulation of cytosolic calcium. The effect on apoptosis is controversial depending on the cell types in which the studies have been conducted. May induce apoptosis by localizing in mitochondria and causing loss of mitochondrial membrane potential. May also modulate apoptosis by binding host CFLAR, a key regulator of the death-inducing signaling complex (DISC). Promotes viral transcription by using the host E3 ubiquitin ligase DDB1 to target the SMC5-SMC6 complex to proteasomal degradation. This host complex would otherwise bind to viral episomal DNA, and prevents its transcription. Moderately stimulates transcription of many different viral and cellular transcription elements. Promoters and enhancers stimulated by HBx contain DNA binding sites for NF-kappa-B, AP-1, AP-2, c-EBP, ATF/CREB, or the calcium-activated factor NF-AT.</text>
</comment>
<comment type="subunit">
    <text evidence="1">May form homodimer. May interact with host CEBPA, CFLAR, CREB1, DDB1, E4F1, HBXIP, HSPD1/HSP60, NFKBIA, POLR2E and SMAD4. Interacts with host SMC5-SMC6 complex and induces its degradation. Interacts with host TRPC4AP; leading to prevent ubiquitination of TRPC4AP. Interacts with host PLSCR1; this interaction promotes ubiquitination and degradation of HBx and impairs HBx-mediated cell proliferation.</text>
</comment>
<comment type="subcellular location">
    <subcellularLocation>
        <location evidence="1">Host cytoplasm</location>
    </subcellularLocation>
    <subcellularLocation>
        <location evidence="1">Host nucleus</location>
    </subcellularLocation>
    <subcellularLocation>
        <location evidence="1">Host mitochondrion</location>
    </subcellularLocation>
    <text evidence="1">Mainly cytoplasmic as only a fraction is detected in the nucleus. In cytoplasm, a minor fraction associates with mitochondria or proteasomes.</text>
</comment>
<comment type="PTM">
    <text evidence="1">A fraction may be phosphorylated in insect cells and HepG2 cells, a human hepatoblastoma cell line. Phosphorylated in vitro by host protein kinase C or mitogen-activated protein kinase. N-acetylated in insect cells.</text>
</comment>
<comment type="similarity">
    <text evidence="1">Belongs to the orthohepadnavirus protein X family.</text>
</comment>
<comment type="caution">
    <text>Transcriptional activities should be taken with a grain of salt. As of 2007, all studies demonstrating in vivo interaction between protein X and transcriptional components were performed with significant overexpression of both proteins and in the absence of viral infection.</text>
</comment>
<organism>
    <name type="scientific">Hepatitis B virus genotype E (isolate Chimpanzee/Ch195/1999)</name>
    <name type="common">HBV-E</name>
    <dbReference type="NCBI Taxonomy" id="489497"/>
    <lineage>
        <taxon>Viruses</taxon>
        <taxon>Riboviria</taxon>
        <taxon>Pararnavirae</taxon>
        <taxon>Artverviricota</taxon>
        <taxon>Revtraviricetes</taxon>
        <taxon>Blubervirales</taxon>
        <taxon>Hepadnaviridae</taxon>
        <taxon>Orthohepadnavirus</taxon>
        <taxon>Hepatitis B virus</taxon>
        <taxon>hepatitis B virus genotype E</taxon>
    </lineage>
</organism>
<accession>Q9QAX0</accession>
<organismHost>
    <name type="scientific">Homo sapiens</name>
    <name type="common">Human</name>
    <dbReference type="NCBI Taxonomy" id="9606"/>
</organismHost>
<organismHost>
    <name type="scientific">Pan troglodytes</name>
    <name type="common">Chimpanzee</name>
    <dbReference type="NCBI Taxonomy" id="9598"/>
</organismHost>
<evidence type="ECO:0000255" key="1">
    <source>
        <dbReference type="HAMAP-Rule" id="MF_04074"/>
    </source>
</evidence>
<feature type="chain" id="PRO_0000319916" description="Protein X">
    <location>
        <begin position="1"/>
        <end position="154"/>
    </location>
</feature>
<feature type="region of interest" description="Mitochondrial targeting sequence" evidence="1">
    <location>
        <begin position="68"/>
        <end position="117"/>
    </location>
</feature>
<gene>
    <name evidence="1" type="primary">X</name>
</gene>
<protein>
    <recommendedName>
        <fullName evidence="1">Protein X</fullName>
    </recommendedName>
    <alternativeName>
        <fullName evidence="1">HBx</fullName>
    </alternativeName>
    <alternativeName>
        <fullName evidence="1">Peptide X</fullName>
    </alternativeName>
    <alternativeName>
        <fullName evidence="1">pX</fullName>
    </alternativeName>
</protein>
<proteinExistence type="inferred from homology"/>
<keyword id="KW-1074">Activation of host NF-kappa-B by virus</keyword>
<keyword id="KW-0010">Activator</keyword>
<keyword id="KW-0053">Apoptosis</keyword>
<keyword id="KW-1035">Host cytoplasm</keyword>
<keyword id="KW-1079">Host G2/M cell cycle arrest by virus</keyword>
<keyword id="KW-1045">Host mitochondrion</keyword>
<keyword id="KW-1048">Host nucleus</keyword>
<keyword id="KW-0945">Host-virus interaction</keyword>
<keyword id="KW-1121">Modulation of host cell cycle by virus</keyword>
<keyword id="KW-0804">Transcription</keyword>
<keyword id="KW-0805">Transcription regulation</keyword>
<reference key="1">
    <citation type="journal article" date="2000" name="Virology">
        <title>Full-genome sequence analyses of hepatitis B virus (HBV) strains recovered from chimpanzees infected in the wild: implications for an origin of HBV.</title>
        <authorList>
            <person name="Takahashi K."/>
            <person name="Brotman B."/>
            <person name="Usuda S."/>
            <person name="Mishiro S."/>
            <person name="Prince A.M."/>
        </authorList>
    </citation>
    <scope>NUCLEOTIDE SEQUENCE [GENOMIC DNA]</scope>
</reference>
<reference key="2">
    <citation type="journal article" date="2004" name="J. Virol.">
        <title>The enigmatic X gene of hepatitis B virus.</title>
        <authorList>
            <person name="Bouchard M.J."/>
            <person name="Schneider R.J."/>
        </authorList>
    </citation>
    <scope>REVIEW</scope>
</reference>
<reference key="3">
    <citation type="journal article" date="2006" name="Cancer Sci.">
        <title>Molecular functions and biological roles of hepatitis B virus x protein.</title>
        <authorList>
            <person name="Tang H."/>
            <person name="Oishi N."/>
            <person name="Kaneko S."/>
            <person name="Murakami S."/>
        </authorList>
    </citation>
    <scope>REVIEW</scope>
</reference>
<sequence length="154" mass="16515">MAARLCCQLDPARDVLCLRPVSAESCGRPVSGSLGDLSSPSPSAVPAVHGAHLSLRGLPVCAFSSAGPCALRFTSARRMETTVNAHQILPKVLHKRTLGLSAMSTTDLEAYFKDCLFKDWEELGEEIRLKVFVLGGCRHKLVCAPAPCNFFTSA</sequence>
<dbReference type="EMBL" id="AB032431">
    <property type="protein sequence ID" value="BAA89320.1"/>
    <property type="molecule type" value="Genomic_DNA"/>
</dbReference>
<dbReference type="SMR" id="Q9QAX0"/>
<dbReference type="Proteomes" id="UP000001388">
    <property type="component" value="Segment"/>
</dbReference>
<dbReference type="GO" id="GO:0033650">
    <property type="term" value="C:host cell mitochondrion"/>
    <property type="evidence" value="ECO:0007669"/>
    <property type="project" value="UniProtKB-SubCell"/>
</dbReference>
<dbReference type="GO" id="GO:0042025">
    <property type="term" value="C:host cell nucleus"/>
    <property type="evidence" value="ECO:0007669"/>
    <property type="project" value="UniProtKB-SubCell"/>
</dbReference>
<dbReference type="GO" id="GO:0006351">
    <property type="term" value="P:DNA-templated transcription"/>
    <property type="evidence" value="ECO:0007669"/>
    <property type="project" value="UniProtKB-UniRule"/>
</dbReference>
<dbReference type="GO" id="GO:0085033">
    <property type="term" value="P:symbiont-mediated activation of host NF-kappaB cascade"/>
    <property type="evidence" value="ECO:0007669"/>
    <property type="project" value="UniProtKB-UniRule"/>
</dbReference>
<dbReference type="GO" id="GO:0039592">
    <property type="term" value="P:symbiont-mediated arrest of host cell cycle during G2/M transition"/>
    <property type="evidence" value="ECO:0007669"/>
    <property type="project" value="UniProtKB-UniRule"/>
</dbReference>
<dbReference type="GO" id="GO:0019079">
    <property type="term" value="P:viral genome replication"/>
    <property type="evidence" value="ECO:0007669"/>
    <property type="project" value="UniProtKB-UniRule"/>
</dbReference>
<dbReference type="HAMAP" id="MF_04074">
    <property type="entry name" value="HBV_X"/>
    <property type="match status" value="1"/>
</dbReference>
<dbReference type="InterPro" id="IPR000236">
    <property type="entry name" value="Transactivation_prot_X"/>
</dbReference>
<dbReference type="Pfam" id="PF00739">
    <property type="entry name" value="X"/>
    <property type="match status" value="1"/>
</dbReference>